<sequence>MISKIDKNKVRLKRHARVRTNLSGTAEKPRLNVYRSNKHIYAQIIDDNKGVTLAQASSKDSDIATTATKVELATKVGEAIAKKAADKGIKEIVFDRGGYLYHGRVKALAEAARESGLEF</sequence>
<comment type="function">
    <text evidence="1">This is one of the proteins that bind and probably mediate the attachment of the 5S RNA into the large ribosomal subunit, where it forms part of the central protuberance.</text>
</comment>
<comment type="subunit">
    <text evidence="1">Part of the 50S ribosomal subunit; part of the 5S rRNA/L5/L18/L25 subcomplex. Contacts the 5S and 23S rRNAs.</text>
</comment>
<comment type="similarity">
    <text evidence="1">Belongs to the universal ribosomal protein uL18 family.</text>
</comment>
<gene>
    <name evidence="1" type="primary">rplR</name>
    <name type="ordered locus">SAHV_2218</name>
</gene>
<name>RL18_STAA1</name>
<reference key="1">
    <citation type="journal article" date="2008" name="Antimicrob. Agents Chemother.">
        <title>Mutated response regulator graR is responsible for phenotypic conversion of Staphylococcus aureus from heterogeneous vancomycin-intermediate resistance to vancomycin-intermediate resistance.</title>
        <authorList>
            <person name="Neoh H.-M."/>
            <person name="Cui L."/>
            <person name="Yuzawa H."/>
            <person name="Takeuchi F."/>
            <person name="Matsuo M."/>
            <person name="Hiramatsu K."/>
        </authorList>
    </citation>
    <scope>NUCLEOTIDE SEQUENCE [LARGE SCALE GENOMIC DNA]</scope>
    <source>
        <strain>Mu3 / ATCC 700698</strain>
    </source>
</reference>
<organism>
    <name type="scientific">Staphylococcus aureus (strain Mu3 / ATCC 700698)</name>
    <dbReference type="NCBI Taxonomy" id="418127"/>
    <lineage>
        <taxon>Bacteria</taxon>
        <taxon>Bacillati</taxon>
        <taxon>Bacillota</taxon>
        <taxon>Bacilli</taxon>
        <taxon>Bacillales</taxon>
        <taxon>Staphylococcaceae</taxon>
        <taxon>Staphylococcus</taxon>
    </lineage>
</organism>
<proteinExistence type="inferred from homology"/>
<protein>
    <recommendedName>
        <fullName evidence="1">Large ribosomal subunit protein uL18</fullName>
    </recommendedName>
    <alternativeName>
        <fullName evidence="2">50S ribosomal protein L18</fullName>
    </alternativeName>
</protein>
<dbReference type="EMBL" id="AP009324">
    <property type="protein sequence ID" value="BAF79101.1"/>
    <property type="molecule type" value="Genomic_DNA"/>
</dbReference>
<dbReference type="RefSeq" id="WP_000623881.1">
    <property type="nucleotide sequence ID" value="NZ_CTYB01000025.1"/>
</dbReference>
<dbReference type="SMR" id="A7X5D9"/>
<dbReference type="KEGG" id="saw:SAHV_2218"/>
<dbReference type="HOGENOM" id="CLU_098841_0_1_9"/>
<dbReference type="GO" id="GO:0022625">
    <property type="term" value="C:cytosolic large ribosomal subunit"/>
    <property type="evidence" value="ECO:0007669"/>
    <property type="project" value="TreeGrafter"/>
</dbReference>
<dbReference type="GO" id="GO:0008097">
    <property type="term" value="F:5S rRNA binding"/>
    <property type="evidence" value="ECO:0007669"/>
    <property type="project" value="TreeGrafter"/>
</dbReference>
<dbReference type="GO" id="GO:0003735">
    <property type="term" value="F:structural constituent of ribosome"/>
    <property type="evidence" value="ECO:0007669"/>
    <property type="project" value="InterPro"/>
</dbReference>
<dbReference type="GO" id="GO:0006412">
    <property type="term" value="P:translation"/>
    <property type="evidence" value="ECO:0007669"/>
    <property type="project" value="UniProtKB-UniRule"/>
</dbReference>
<dbReference type="CDD" id="cd00432">
    <property type="entry name" value="Ribosomal_L18_L5e"/>
    <property type="match status" value="1"/>
</dbReference>
<dbReference type="FunFam" id="3.30.420.100:FF:000001">
    <property type="entry name" value="50S ribosomal protein L18"/>
    <property type="match status" value="1"/>
</dbReference>
<dbReference type="Gene3D" id="3.30.420.100">
    <property type="match status" value="1"/>
</dbReference>
<dbReference type="HAMAP" id="MF_01337_B">
    <property type="entry name" value="Ribosomal_uL18_B"/>
    <property type="match status" value="1"/>
</dbReference>
<dbReference type="InterPro" id="IPR004389">
    <property type="entry name" value="Ribosomal_uL18_bac-type"/>
</dbReference>
<dbReference type="InterPro" id="IPR005484">
    <property type="entry name" value="Ribosomal_uL18_bac/euk"/>
</dbReference>
<dbReference type="NCBIfam" id="TIGR00060">
    <property type="entry name" value="L18_bact"/>
    <property type="match status" value="1"/>
</dbReference>
<dbReference type="PANTHER" id="PTHR12899">
    <property type="entry name" value="39S RIBOSOMAL PROTEIN L18, MITOCHONDRIAL"/>
    <property type="match status" value="1"/>
</dbReference>
<dbReference type="PANTHER" id="PTHR12899:SF3">
    <property type="entry name" value="LARGE RIBOSOMAL SUBUNIT PROTEIN UL18M"/>
    <property type="match status" value="1"/>
</dbReference>
<dbReference type="Pfam" id="PF00861">
    <property type="entry name" value="Ribosomal_L18p"/>
    <property type="match status" value="1"/>
</dbReference>
<dbReference type="SUPFAM" id="SSF53137">
    <property type="entry name" value="Translational machinery components"/>
    <property type="match status" value="1"/>
</dbReference>
<keyword id="KW-0687">Ribonucleoprotein</keyword>
<keyword id="KW-0689">Ribosomal protein</keyword>
<keyword id="KW-0694">RNA-binding</keyword>
<keyword id="KW-0699">rRNA-binding</keyword>
<accession>A7X5D9</accession>
<evidence type="ECO:0000255" key="1">
    <source>
        <dbReference type="HAMAP-Rule" id="MF_01337"/>
    </source>
</evidence>
<evidence type="ECO:0000305" key="2"/>
<feature type="chain" id="PRO_1000053118" description="Large ribosomal subunit protein uL18">
    <location>
        <begin position="1"/>
        <end position="119"/>
    </location>
</feature>